<feature type="chain" id="PRO_0000153465" description="Histidinol-phosphate aminotransferase">
    <location>
        <begin position="1"/>
        <end position="371"/>
    </location>
</feature>
<feature type="modified residue" description="N6-(pyridoxal phosphate)lysine" evidence="1">
    <location>
        <position position="228"/>
    </location>
</feature>
<comment type="catalytic activity">
    <reaction evidence="1">
        <text>L-histidinol phosphate + 2-oxoglutarate = 3-(imidazol-4-yl)-2-oxopropyl phosphate + L-glutamate</text>
        <dbReference type="Rhea" id="RHEA:23744"/>
        <dbReference type="ChEBI" id="CHEBI:16810"/>
        <dbReference type="ChEBI" id="CHEBI:29985"/>
        <dbReference type="ChEBI" id="CHEBI:57766"/>
        <dbReference type="ChEBI" id="CHEBI:57980"/>
        <dbReference type="EC" id="2.6.1.9"/>
    </reaction>
</comment>
<comment type="cofactor">
    <cofactor evidence="1">
        <name>pyridoxal 5'-phosphate</name>
        <dbReference type="ChEBI" id="CHEBI:597326"/>
    </cofactor>
</comment>
<comment type="pathway">
    <text evidence="1">Amino-acid biosynthesis; L-histidine biosynthesis; L-histidine from 5-phospho-alpha-D-ribose 1-diphosphate: step 7/9.</text>
</comment>
<comment type="subunit">
    <text evidence="1">Homodimer.</text>
</comment>
<comment type="similarity">
    <text evidence="1">Belongs to the class-II pyridoxal-phosphate-dependent aminotransferase family. Histidinol-phosphate aminotransferase subfamily.</text>
</comment>
<organism>
    <name type="scientific">Thermosynechococcus vestitus (strain NIES-2133 / IAM M-273 / BP-1)</name>
    <dbReference type="NCBI Taxonomy" id="197221"/>
    <lineage>
        <taxon>Bacteria</taxon>
        <taxon>Bacillati</taxon>
        <taxon>Cyanobacteriota</taxon>
        <taxon>Cyanophyceae</taxon>
        <taxon>Acaryochloridales</taxon>
        <taxon>Thermosynechococcaceae</taxon>
        <taxon>Thermosynechococcus</taxon>
    </lineage>
</organism>
<reference key="1">
    <citation type="journal article" date="2002" name="DNA Res.">
        <title>Complete genome structure of the thermophilic cyanobacterium Thermosynechococcus elongatus BP-1.</title>
        <authorList>
            <person name="Nakamura Y."/>
            <person name="Kaneko T."/>
            <person name="Sato S."/>
            <person name="Ikeuchi M."/>
            <person name="Katoh H."/>
            <person name="Sasamoto S."/>
            <person name="Watanabe A."/>
            <person name="Iriguchi M."/>
            <person name="Kawashima K."/>
            <person name="Kimura T."/>
            <person name="Kishida Y."/>
            <person name="Kiyokawa C."/>
            <person name="Kohara M."/>
            <person name="Matsumoto M."/>
            <person name="Matsuno A."/>
            <person name="Nakazaki N."/>
            <person name="Shimpo S."/>
            <person name="Sugimoto M."/>
            <person name="Takeuchi C."/>
            <person name="Yamada M."/>
            <person name="Tabata S."/>
        </authorList>
    </citation>
    <scope>NUCLEOTIDE SEQUENCE [LARGE SCALE GENOMIC DNA]</scope>
    <source>
        <strain>NIES-2133 / IAM M-273 / BP-1</strain>
    </source>
</reference>
<accession>Q8DM42</accession>
<proteinExistence type="inferred from homology"/>
<evidence type="ECO:0000255" key="1">
    <source>
        <dbReference type="HAMAP-Rule" id="MF_01023"/>
    </source>
</evidence>
<keyword id="KW-0028">Amino-acid biosynthesis</keyword>
<keyword id="KW-0032">Aminotransferase</keyword>
<keyword id="KW-0368">Histidine biosynthesis</keyword>
<keyword id="KW-0663">Pyridoxal phosphate</keyword>
<keyword id="KW-1185">Reference proteome</keyword>
<keyword id="KW-0808">Transferase</keyword>
<dbReference type="EC" id="2.6.1.9" evidence="1"/>
<dbReference type="EMBL" id="BA000039">
    <property type="protein sequence ID" value="BAC07834.1"/>
    <property type="molecule type" value="Genomic_DNA"/>
</dbReference>
<dbReference type="RefSeq" id="NP_681072.1">
    <property type="nucleotide sequence ID" value="NC_004113.1"/>
</dbReference>
<dbReference type="RefSeq" id="WP_011056136.1">
    <property type="nucleotide sequence ID" value="NC_004113.1"/>
</dbReference>
<dbReference type="SMR" id="Q8DM42"/>
<dbReference type="STRING" id="197221.gene:10746864"/>
<dbReference type="EnsemblBacteria" id="BAC07834">
    <property type="protein sequence ID" value="BAC07834"/>
    <property type="gene ID" value="BAC07834"/>
</dbReference>
<dbReference type="KEGG" id="tel:tlr0281"/>
<dbReference type="PATRIC" id="fig|197221.4.peg.295"/>
<dbReference type="eggNOG" id="COG0079">
    <property type="taxonomic scope" value="Bacteria"/>
</dbReference>
<dbReference type="UniPathway" id="UPA00031">
    <property type="reaction ID" value="UER00012"/>
</dbReference>
<dbReference type="Proteomes" id="UP000000440">
    <property type="component" value="Chromosome"/>
</dbReference>
<dbReference type="GO" id="GO:0004400">
    <property type="term" value="F:histidinol-phosphate transaminase activity"/>
    <property type="evidence" value="ECO:0007669"/>
    <property type="project" value="UniProtKB-UniRule"/>
</dbReference>
<dbReference type="GO" id="GO:0030170">
    <property type="term" value="F:pyridoxal phosphate binding"/>
    <property type="evidence" value="ECO:0007669"/>
    <property type="project" value="InterPro"/>
</dbReference>
<dbReference type="GO" id="GO:0000105">
    <property type="term" value="P:L-histidine biosynthetic process"/>
    <property type="evidence" value="ECO:0007669"/>
    <property type="project" value="UniProtKB-UniRule"/>
</dbReference>
<dbReference type="CDD" id="cd00609">
    <property type="entry name" value="AAT_like"/>
    <property type="match status" value="1"/>
</dbReference>
<dbReference type="Gene3D" id="3.90.1150.10">
    <property type="entry name" value="Aspartate Aminotransferase, domain 1"/>
    <property type="match status" value="1"/>
</dbReference>
<dbReference type="Gene3D" id="3.40.640.10">
    <property type="entry name" value="Type I PLP-dependent aspartate aminotransferase-like (Major domain)"/>
    <property type="match status" value="1"/>
</dbReference>
<dbReference type="HAMAP" id="MF_01023">
    <property type="entry name" value="HisC_aminotrans_2"/>
    <property type="match status" value="1"/>
</dbReference>
<dbReference type="InterPro" id="IPR004839">
    <property type="entry name" value="Aminotransferase_I/II_large"/>
</dbReference>
<dbReference type="InterPro" id="IPR005861">
    <property type="entry name" value="HisP_aminotrans"/>
</dbReference>
<dbReference type="InterPro" id="IPR050106">
    <property type="entry name" value="HistidinolP_aminotransfase"/>
</dbReference>
<dbReference type="InterPro" id="IPR015424">
    <property type="entry name" value="PyrdxlP-dep_Trfase"/>
</dbReference>
<dbReference type="InterPro" id="IPR015421">
    <property type="entry name" value="PyrdxlP-dep_Trfase_major"/>
</dbReference>
<dbReference type="InterPro" id="IPR015422">
    <property type="entry name" value="PyrdxlP-dep_Trfase_small"/>
</dbReference>
<dbReference type="NCBIfam" id="NF002726">
    <property type="entry name" value="PRK02610.1"/>
    <property type="match status" value="1"/>
</dbReference>
<dbReference type="PANTHER" id="PTHR43643:SF6">
    <property type="entry name" value="HISTIDINOL-PHOSPHATE AMINOTRANSFERASE"/>
    <property type="match status" value="1"/>
</dbReference>
<dbReference type="PANTHER" id="PTHR43643">
    <property type="entry name" value="HISTIDINOL-PHOSPHATE AMINOTRANSFERASE 2"/>
    <property type="match status" value="1"/>
</dbReference>
<dbReference type="Pfam" id="PF00155">
    <property type="entry name" value="Aminotran_1_2"/>
    <property type="match status" value="1"/>
</dbReference>
<dbReference type="SUPFAM" id="SSF53383">
    <property type="entry name" value="PLP-dependent transferases"/>
    <property type="match status" value="1"/>
</dbReference>
<sequence>MATFLRPELSNFRAYSTPTSDSLPLELDYLDTNEFPWDLPTALKEVLAQQYVSTLASHRYPDSHHWPLRQAIARYVSEQSPTEISPHQIAVGNGSDELIRSILLATAIGGYGSILVAEPTFSIYGILAQTLGIPVHRATRDPDTFAVEIAAANTLIAQAAPPVRVLFMLQPNSPTGNPLTAAEVDWLRQLPEDILVVIDEAYFEFSGKTLVGDLAAHPNWLILRTFSKAFRLAAHRVGYAIGNAEVIAVLEKVRLPYNLPTFSQVAAQVVLDHRQALLAEIPTVLAQRDRLYKWLQSCPQLHVWPSVANFLFFRLREPQHTPSLWDALRDQGTLVRAIAGGIRVTIGTPAQMERFWQRLQASLNQQKSTDN</sequence>
<protein>
    <recommendedName>
        <fullName evidence="1">Histidinol-phosphate aminotransferase</fullName>
        <ecNumber evidence="1">2.6.1.9</ecNumber>
    </recommendedName>
    <alternativeName>
        <fullName evidence="1">Imidazole acetol-phosphate transaminase</fullName>
    </alternativeName>
</protein>
<name>HIS8_THEVB</name>
<gene>
    <name evidence="1" type="primary">hisC</name>
    <name type="ordered locus">tlr0281</name>
</gene>